<reference key="1">
    <citation type="journal article" date="1998" name="Science">
        <title>Complete genome sequence of Treponema pallidum, the syphilis spirochete.</title>
        <authorList>
            <person name="Fraser C.M."/>
            <person name="Norris S.J."/>
            <person name="Weinstock G.M."/>
            <person name="White O."/>
            <person name="Sutton G.G."/>
            <person name="Dodson R.J."/>
            <person name="Gwinn M.L."/>
            <person name="Hickey E.K."/>
            <person name="Clayton R.A."/>
            <person name="Ketchum K.A."/>
            <person name="Sodergren E."/>
            <person name="Hardham J.M."/>
            <person name="McLeod M.P."/>
            <person name="Salzberg S.L."/>
            <person name="Peterson J.D."/>
            <person name="Khalak H.G."/>
            <person name="Richardson D.L."/>
            <person name="Howell J.K."/>
            <person name="Chidambaram M."/>
            <person name="Utterback T.R."/>
            <person name="McDonald L.A."/>
            <person name="Artiach P."/>
            <person name="Bowman C."/>
            <person name="Cotton M.D."/>
            <person name="Fujii C."/>
            <person name="Garland S.A."/>
            <person name="Hatch B."/>
            <person name="Horst K."/>
            <person name="Roberts K.M."/>
            <person name="Sandusky M."/>
            <person name="Weidman J.F."/>
            <person name="Smith H.O."/>
            <person name="Venter J.C."/>
        </authorList>
    </citation>
    <scope>NUCLEOTIDE SEQUENCE [LARGE SCALE GENOMIC DNA]</scope>
    <source>
        <strain>Nichols</strain>
    </source>
</reference>
<feature type="chain" id="PRO_0000130744" description="Large ribosomal subunit protein uL24">
    <location>
        <begin position="1"/>
        <end position="103"/>
    </location>
</feature>
<accession>O83230</accession>
<gene>
    <name evidence="1" type="primary">rplX</name>
    <name type="ordered locus">TP_0200</name>
</gene>
<proteinExistence type="inferred from homology"/>
<protein>
    <recommendedName>
        <fullName evidence="1">Large ribosomal subunit protein uL24</fullName>
    </recommendedName>
    <alternativeName>
        <fullName evidence="2">50S ribosomal protein L24</fullName>
    </alternativeName>
</protein>
<sequence length="103" mass="11572">MGKTVKIRKDDMVLVIAGKDRGKRGAVLRVLRDVDRVLVQGLNMRKKTIRRKSAQDEGGIMEVEAPIHISNVMIMGKKGPTRVGYRMENGKKVRVCRKTGEVL</sequence>
<keyword id="KW-1185">Reference proteome</keyword>
<keyword id="KW-0687">Ribonucleoprotein</keyword>
<keyword id="KW-0689">Ribosomal protein</keyword>
<keyword id="KW-0694">RNA-binding</keyword>
<keyword id="KW-0699">rRNA-binding</keyword>
<comment type="function">
    <text evidence="1">One of two assembly initiator proteins, it binds directly to the 5'-end of the 23S rRNA, where it nucleates assembly of the 50S subunit.</text>
</comment>
<comment type="function">
    <text evidence="1">One of the proteins that surrounds the polypeptide exit tunnel on the outside of the subunit.</text>
</comment>
<comment type="subunit">
    <text evidence="1">Part of the 50S ribosomal subunit.</text>
</comment>
<comment type="similarity">
    <text evidence="1">Belongs to the universal ribosomal protein uL24 family.</text>
</comment>
<evidence type="ECO:0000255" key="1">
    <source>
        <dbReference type="HAMAP-Rule" id="MF_01326"/>
    </source>
</evidence>
<evidence type="ECO:0000305" key="2"/>
<name>RL24_TREPA</name>
<organism>
    <name type="scientific">Treponema pallidum (strain Nichols)</name>
    <dbReference type="NCBI Taxonomy" id="243276"/>
    <lineage>
        <taxon>Bacteria</taxon>
        <taxon>Pseudomonadati</taxon>
        <taxon>Spirochaetota</taxon>
        <taxon>Spirochaetia</taxon>
        <taxon>Spirochaetales</taxon>
        <taxon>Treponemataceae</taxon>
        <taxon>Treponema</taxon>
    </lineage>
</organism>
<dbReference type="EMBL" id="AE000520">
    <property type="protein sequence ID" value="AAC65185.1"/>
    <property type="molecule type" value="Genomic_DNA"/>
</dbReference>
<dbReference type="PIR" id="B71356">
    <property type="entry name" value="B71356"/>
</dbReference>
<dbReference type="RefSeq" id="WP_010881647.1">
    <property type="nucleotide sequence ID" value="NC_021490.2"/>
</dbReference>
<dbReference type="SMR" id="O83230"/>
<dbReference type="STRING" id="243276.TP_0200"/>
<dbReference type="EnsemblBacteria" id="AAC65185">
    <property type="protein sequence ID" value="AAC65185"/>
    <property type="gene ID" value="TP_0200"/>
</dbReference>
<dbReference type="GeneID" id="93875988"/>
<dbReference type="KEGG" id="tpa:TP_0200"/>
<dbReference type="KEGG" id="tpw:TPANIC_0200"/>
<dbReference type="eggNOG" id="COG0198">
    <property type="taxonomic scope" value="Bacteria"/>
</dbReference>
<dbReference type="HOGENOM" id="CLU_093315_2_0_12"/>
<dbReference type="OrthoDB" id="9807419at2"/>
<dbReference type="Proteomes" id="UP000000811">
    <property type="component" value="Chromosome"/>
</dbReference>
<dbReference type="GO" id="GO:1990904">
    <property type="term" value="C:ribonucleoprotein complex"/>
    <property type="evidence" value="ECO:0007669"/>
    <property type="project" value="UniProtKB-KW"/>
</dbReference>
<dbReference type="GO" id="GO:0005840">
    <property type="term" value="C:ribosome"/>
    <property type="evidence" value="ECO:0007669"/>
    <property type="project" value="UniProtKB-KW"/>
</dbReference>
<dbReference type="GO" id="GO:0019843">
    <property type="term" value="F:rRNA binding"/>
    <property type="evidence" value="ECO:0007669"/>
    <property type="project" value="UniProtKB-UniRule"/>
</dbReference>
<dbReference type="GO" id="GO:0003735">
    <property type="term" value="F:structural constituent of ribosome"/>
    <property type="evidence" value="ECO:0007669"/>
    <property type="project" value="InterPro"/>
</dbReference>
<dbReference type="GO" id="GO:0006412">
    <property type="term" value="P:translation"/>
    <property type="evidence" value="ECO:0007669"/>
    <property type="project" value="UniProtKB-UniRule"/>
</dbReference>
<dbReference type="CDD" id="cd06089">
    <property type="entry name" value="KOW_RPL26"/>
    <property type="match status" value="1"/>
</dbReference>
<dbReference type="Gene3D" id="2.30.30.30">
    <property type="match status" value="1"/>
</dbReference>
<dbReference type="HAMAP" id="MF_01326_B">
    <property type="entry name" value="Ribosomal_uL24_B"/>
    <property type="match status" value="1"/>
</dbReference>
<dbReference type="InterPro" id="IPR005824">
    <property type="entry name" value="KOW"/>
</dbReference>
<dbReference type="InterPro" id="IPR014722">
    <property type="entry name" value="Rib_uL2_dom2"/>
</dbReference>
<dbReference type="InterPro" id="IPR003256">
    <property type="entry name" value="Ribosomal_uL24"/>
</dbReference>
<dbReference type="InterPro" id="IPR005825">
    <property type="entry name" value="Ribosomal_uL24_CS"/>
</dbReference>
<dbReference type="InterPro" id="IPR041988">
    <property type="entry name" value="Ribosomal_uL24_KOW"/>
</dbReference>
<dbReference type="InterPro" id="IPR008991">
    <property type="entry name" value="Translation_prot_SH3-like_sf"/>
</dbReference>
<dbReference type="NCBIfam" id="TIGR01079">
    <property type="entry name" value="rplX_bact"/>
    <property type="match status" value="1"/>
</dbReference>
<dbReference type="PANTHER" id="PTHR12903">
    <property type="entry name" value="MITOCHONDRIAL RIBOSOMAL PROTEIN L24"/>
    <property type="match status" value="1"/>
</dbReference>
<dbReference type="Pfam" id="PF00467">
    <property type="entry name" value="KOW"/>
    <property type="match status" value="1"/>
</dbReference>
<dbReference type="Pfam" id="PF17136">
    <property type="entry name" value="ribosomal_L24"/>
    <property type="match status" value="1"/>
</dbReference>
<dbReference type="SMART" id="SM00739">
    <property type="entry name" value="KOW"/>
    <property type="match status" value="1"/>
</dbReference>
<dbReference type="SUPFAM" id="SSF50104">
    <property type="entry name" value="Translation proteins SH3-like domain"/>
    <property type="match status" value="1"/>
</dbReference>
<dbReference type="PROSITE" id="PS01108">
    <property type="entry name" value="RIBOSOMAL_L24"/>
    <property type="match status" value="1"/>
</dbReference>